<protein>
    <recommendedName>
        <fullName>Protein transport protein Sec61 subunit alpha</fullName>
    </recommendedName>
</protein>
<feature type="initiator methionine" description="Removed" evidence="1">
    <location>
        <position position="1"/>
    </location>
</feature>
<feature type="chain" id="PRO_0000131803" description="Protein transport protein Sec61 subunit alpha">
    <location>
        <begin position="2"/>
        <end position="476"/>
    </location>
</feature>
<feature type="topological domain" description="Cytoplasmic" evidence="4">
    <location>
        <begin position="2"/>
        <end position="33"/>
    </location>
</feature>
<feature type="transmembrane region" description="Helical" evidence="4">
    <location>
        <begin position="34"/>
        <end position="53"/>
    </location>
</feature>
<feature type="topological domain" description="Lumenal" evidence="4">
    <location>
        <begin position="54"/>
        <end position="76"/>
    </location>
</feature>
<feature type="transmembrane region" description="Helical" evidence="4">
    <location>
        <begin position="77"/>
        <end position="96"/>
    </location>
</feature>
<feature type="topological domain" description="Cytoplasmic" evidence="4">
    <location>
        <begin position="97"/>
        <end position="117"/>
    </location>
</feature>
<feature type="transmembrane region" description="Helical" evidence="4">
    <location>
        <begin position="118"/>
        <end position="138"/>
    </location>
</feature>
<feature type="topological domain" description="Lumenal" evidence="4">
    <location>
        <begin position="139"/>
        <end position="144"/>
    </location>
</feature>
<feature type="transmembrane region" description="Helical" evidence="4">
    <location>
        <begin position="145"/>
        <end position="165"/>
    </location>
</feature>
<feature type="topological domain" description="Cytoplasmic" evidence="4">
    <location>
        <begin position="166"/>
        <end position="172"/>
    </location>
</feature>
<feature type="transmembrane region" description="Helical" evidence="4">
    <location>
        <begin position="173"/>
        <end position="193"/>
    </location>
</feature>
<feature type="topological domain" description="Lumenal" evidence="4">
    <location>
        <begin position="194"/>
        <end position="240"/>
    </location>
</feature>
<feature type="transmembrane region" description="Helical" evidence="4">
    <location>
        <begin position="241"/>
        <end position="261"/>
    </location>
</feature>
<feature type="topological domain" description="Cytoplasmic" evidence="4">
    <location>
        <begin position="262"/>
        <end position="288"/>
    </location>
</feature>
<feature type="transmembrane region" description="Helical" evidence="4">
    <location>
        <begin position="289"/>
        <end position="309"/>
    </location>
</feature>
<feature type="topological domain" description="Lumenal" evidence="4">
    <location>
        <begin position="310"/>
        <end position="354"/>
    </location>
</feature>
<feature type="transmembrane region" description="Helical" evidence="4">
    <location>
        <begin position="355"/>
        <end position="375"/>
    </location>
</feature>
<feature type="topological domain" description="Cytoplasmic" evidence="4">
    <location>
        <begin position="376"/>
        <end position="420"/>
    </location>
</feature>
<feature type="transmembrane region" description="Helical" evidence="4">
    <location>
        <begin position="421"/>
        <end position="441"/>
    </location>
</feature>
<feature type="topological domain" description="Lumenal" evidence="4">
    <location>
        <begin position="442"/>
        <end position="445"/>
    </location>
</feature>
<feature type="transmembrane region" description="Helical" evidence="4">
    <location>
        <begin position="446"/>
        <end position="462"/>
    </location>
</feature>
<feature type="topological domain" description="Cytoplasmic" evidence="4">
    <location>
        <begin position="463"/>
        <end position="476"/>
    </location>
</feature>
<sequence>MGIKFLEVIKPFCAVLPEIQKPERKIQFREKVLWTAITLFIFLVCCQIPLFGIMSSDSADPFYWMRVILASNRGTLMELGISPIVTSGLIMQLLAGAKIIEVGDTPKDRALFNGAQKLFGMIITIGQAIVYVMTGMYGDPSEMGAGICLLIIIQLFVAGLIVLLLDELLQKGYGLGSGISLFIATNICETIVWKAFSPTTVNTGRGTEFEGAIIALFHLLATRTDKVRALREAFYRQNLPNILNLIATVFVFAVVIYFQGFRVDLPIKSARYRGQYNTYPIKLFYTSNIPIILQSALVSNLYVISQMLSTRFSGNFLVNLLGTWSDATSGGPARAYPVAGLCYYLSPPESFGSVLDDPVHAAIYIVFMLGSCAFFSKTWIEVSGSSAKDVAKQLKEQQMVMRGHRETSMVHELNRYIPTAAAFGGLCIGGLSVMADFLGAIGSGTGILLAVTIIYQYFEIFVKEQSEMGSMGALLF</sequence>
<dbReference type="EMBL" id="AY113840">
    <property type="protein sequence ID" value="AAM62135.1"/>
    <property type="molecule type" value="mRNA"/>
</dbReference>
<dbReference type="SMR" id="Q7T278"/>
<dbReference type="GO" id="GO:0005789">
    <property type="term" value="C:endoplasmic reticulum membrane"/>
    <property type="evidence" value="ECO:0000250"/>
    <property type="project" value="UniProtKB"/>
</dbReference>
<dbReference type="GO" id="GO:0039019">
    <property type="term" value="P:pronephric nephron development"/>
    <property type="evidence" value="ECO:0000250"/>
    <property type="project" value="UniProtKB"/>
</dbReference>
<dbReference type="GO" id="GO:0045047">
    <property type="term" value="P:protein targeting to ER"/>
    <property type="evidence" value="ECO:0000250"/>
    <property type="project" value="UniProtKB"/>
</dbReference>
<dbReference type="GO" id="GO:0015031">
    <property type="term" value="P:protein transport"/>
    <property type="evidence" value="ECO:0007669"/>
    <property type="project" value="UniProtKB-KW"/>
</dbReference>
<dbReference type="FunFam" id="1.10.3370.10:FF:000002">
    <property type="entry name" value="Transport Sec61 subunit alpha isoform 2"/>
    <property type="match status" value="1"/>
</dbReference>
<dbReference type="Gene3D" id="1.10.3370.10">
    <property type="entry name" value="SecY subunit domain"/>
    <property type="match status" value="1"/>
</dbReference>
<dbReference type="InterPro" id="IPR002208">
    <property type="entry name" value="SecY/SEC61-alpha"/>
</dbReference>
<dbReference type="InterPro" id="IPR030659">
    <property type="entry name" value="SecY_CS"/>
</dbReference>
<dbReference type="InterPro" id="IPR023201">
    <property type="entry name" value="SecY_dom_sf"/>
</dbReference>
<dbReference type="InterPro" id="IPR019561">
    <property type="entry name" value="Translocon_Sec61/SecY_plug_dom"/>
</dbReference>
<dbReference type="NCBIfam" id="TIGR00967">
    <property type="entry name" value="3a0501s007"/>
    <property type="match status" value="1"/>
</dbReference>
<dbReference type="NCBIfam" id="NF006341">
    <property type="entry name" value="PRK08568.1-5"/>
    <property type="match status" value="1"/>
</dbReference>
<dbReference type="PANTHER" id="PTHR10906">
    <property type="entry name" value="SECY/SEC61-ALPHA FAMILY MEMBER"/>
    <property type="match status" value="1"/>
</dbReference>
<dbReference type="Pfam" id="PF10559">
    <property type="entry name" value="Plug_translocon"/>
    <property type="match status" value="1"/>
</dbReference>
<dbReference type="Pfam" id="PF00344">
    <property type="entry name" value="SecY"/>
    <property type="match status" value="1"/>
</dbReference>
<dbReference type="PIRSF" id="PIRSF004557">
    <property type="entry name" value="SecY"/>
    <property type="match status" value="1"/>
</dbReference>
<dbReference type="SUPFAM" id="SSF103491">
    <property type="entry name" value="Preprotein translocase SecY subunit"/>
    <property type="match status" value="1"/>
</dbReference>
<dbReference type="PROSITE" id="PS00755">
    <property type="entry name" value="SECY_1"/>
    <property type="match status" value="1"/>
</dbReference>
<dbReference type="PROSITE" id="PS00756">
    <property type="entry name" value="SECY_2"/>
    <property type="match status" value="1"/>
</dbReference>
<accession>Q7T278</accession>
<proteinExistence type="evidence at transcript level"/>
<organism>
    <name type="scientific">Harpagifer antarcticus</name>
    <name type="common">Antarctic spiny plunderfish</name>
    <dbReference type="NCBI Taxonomy" id="43256"/>
    <lineage>
        <taxon>Eukaryota</taxon>
        <taxon>Metazoa</taxon>
        <taxon>Chordata</taxon>
        <taxon>Craniata</taxon>
        <taxon>Vertebrata</taxon>
        <taxon>Euteleostomi</taxon>
        <taxon>Actinopterygii</taxon>
        <taxon>Neopterygii</taxon>
        <taxon>Teleostei</taxon>
        <taxon>Neoteleostei</taxon>
        <taxon>Acanthomorphata</taxon>
        <taxon>Eupercaria</taxon>
        <taxon>Perciformes</taxon>
        <taxon>Notothenioidei</taxon>
        <taxon>Harpagiferidae</taxon>
        <taxon>Harpagifer</taxon>
    </lineage>
</organism>
<keyword id="KW-0217">Developmental protein</keyword>
<keyword id="KW-0256">Endoplasmic reticulum</keyword>
<keyword id="KW-0472">Membrane</keyword>
<keyword id="KW-0653">Protein transport</keyword>
<keyword id="KW-0811">Translocation</keyword>
<keyword id="KW-0812">Transmembrane</keyword>
<keyword id="KW-1133">Transmembrane helix</keyword>
<keyword id="KW-0813">Transport</keyword>
<comment type="function">
    <text evidence="3">Component of SEC61 channel-forming translocon complex that mediates transport of signal peptide-containing precursor polypeptides across the endoplasmic reticulum (ER). Forms a ribosome receptor and a gated pore in the ER membrane, both functions required for cotranslational translocation of nascent polypeptides. May cooperate with auxiliary protein SEC62, SEC63 and HSPA5/BiP to enable post-translational transport of small presecretory proteins. The SEC61 channel is also involved in ER membrane insertion of transmembrane proteins: it mediates membrane insertion of the first few transmembrane segments of proteins, while insertion of subsequent transmembrane regions of multi-pass membrane proteins is mediated by the multi-pass translocon (MPT) complex.</text>
</comment>
<comment type="subunit">
    <text evidence="2 3">The SEC61 channel-forming translocon complex consists of channel-forming core components SEC61A1, SEC61B and SEC61G and different auxiliary components such as SEC62 and SEC63 (By similarity). The SEC61 channel associates with the multi-pass translocon (MPT) complex (By similarity).</text>
</comment>
<comment type="subcellular location">
    <subcellularLocation>
        <location evidence="3">Endoplasmic reticulum membrane</location>
        <topology evidence="3">Multi-pass membrane protein</topology>
    </subcellularLocation>
</comment>
<comment type="similarity">
    <text evidence="5">Belongs to the SecY/SEC61-alpha family.</text>
</comment>
<gene>
    <name type="primary">sec61a</name>
</gene>
<reference key="1">
    <citation type="journal article" date="2003" name="J. Cell Sci.">
        <title>Protein translocation across the endoplasmic reticulum membrane in cold-adapted organisms.</title>
        <authorList>
            <person name="Romisch K."/>
            <person name="Collie N."/>
            <person name="Soto N."/>
            <person name="Logue J."/>
            <person name="Lindsay M."/>
            <person name="Scheper W."/>
            <person name="Cheng C.-H.C."/>
        </authorList>
    </citation>
    <scope>NUCLEOTIDE SEQUENCE [MRNA]</scope>
    <source>
        <tissue>Liver</tissue>
    </source>
</reference>
<name>SC61A_HARAN</name>
<evidence type="ECO:0000250" key="1"/>
<evidence type="ECO:0000250" key="2">
    <source>
        <dbReference type="UniProtKB" id="P38377"/>
    </source>
</evidence>
<evidence type="ECO:0000250" key="3">
    <source>
        <dbReference type="UniProtKB" id="P61619"/>
    </source>
</evidence>
<evidence type="ECO:0000255" key="4"/>
<evidence type="ECO:0000305" key="5"/>